<comment type="function">
    <text evidence="3">Conjugation of reduced glutathione to a wide number of exogenous and endogenous hydrophobic electrophiles.</text>
</comment>
<comment type="catalytic activity">
    <reaction evidence="3">
        <text>RX + glutathione = an S-substituted glutathione + a halide anion + H(+)</text>
        <dbReference type="Rhea" id="RHEA:16437"/>
        <dbReference type="ChEBI" id="CHEBI:15378"/>
        <dbReference type="ChEBI" id="CHEBI:16042"/>
        <dbReference type="ChEBI" id="CHEBI:17792"/>
        <dbReference type="ChEBI" id="CHEBI:57925"/>
        <dbReference type="ChEBI" id="CHEBI:90779"/>
        <dbReference type="EC" id="2.5.1.18"/>
    </reaction>
</comment>
<comment type="subunit">
    <text evidence="3">Homodimer.</text>
</comment>
<comment type="subcellular location">
    <subcellularLocation>
        <location evidence="3">Cytoplasm</location>
    </subcellularLocation>
</comment>
<comment type="miscellaneous">
    <text>Yb subclass selectively binds steroid hormones.</text>
</comment>
<comment type="similarity">
    <text evidence="5">Belongs to the GST superfamily. Mu family.</text>
</comment>
<comment type="caution">
    <text evidence="5">Gstm7 is the putative ortholog of human GSTM2.</text>
</comment>
<dbReference type="EC" id="2.5.1.18" evidence="3"/>
<dbReference type="EMBL" id="J02744">
    <property type="protein sequence ID" value="AAA41292.1"/>
    <property type="molecule type" value="mRNA"/>
</dbReference>
<dbReference type="EMBL" id="L35330">
    <property type="protein sequence ID" value="AAB00123.1"/>
    <property type="molecule type" value="Genomic_DNA"/>
</dbReference>
<dbReference type="EMBL" id="BC059130">
    <property type="protein sequence ID" value="AAH59130.1"/>
    <property type="molecule type" value="mRNA"/>
</dbReference>
<dbReference type="PIR" id="A29036">
    <property type="entry name" value="A29036"/>
</dbReference>
<dbReference type="RefSeq" id="NP_112416.1">
    <property type="nucleotide sequence ID" value="NM_031154.2"/>
</dbReference>
<dbReference type="SMR" id="P08009"/>
<dbReference type="FunCoup" id="P08009">
    <property type="interactions" value="158"/>
</dbReference>
<dbReference type="STRING" id="10116.ENSRNOP00000073172"/>
<dbReference type="iPTMnet" id="P08009"/>
<dbReference type="PhosphoSitePlus" id="P08009"/>
<dbReference type="SwissPalm" id="P08009"/>
<dbReference type="jPOST" id="P08009"/>
<dbReference type="PaxDb" id="10116-ENSRNOP00000025689"/>
<dbReference type="Ensembl" id="ENSRNOT00000025689.5">
    <property type="protein sequence ID" value="ENSRNOP00000025689.2"/>
    <property type="gene ID" value="ENSRNOG00000018937.5"/>
</dbReference>
<dbReference type="GeneID" id="81869"/>
<dbReference type="KEGG" id="rno:81869"/>
<dbReference type="UCSC" id="RGD:621287">
    <property type="organism name" value="rat"/>
</dbReference>
<dbReference type="AGR" id="RGD:621287"/>
<dbReference type="CTD" id="68312"/>
<dbReference type="RGD" id="621287">
    <property type="gene designation" value="Gstm7"/>
</dbReference>
<dbReference type="eggNOG" id="KOG1695">
    <property type="taxonomic scope" value="Eukaryota"/>
</dbReference>
<dbReference type="GeneTree" id="ENSGT00940000155416"/>
<dbReference type="HOGENOM" id="CLU_039475_2_0_1"/>
<dbReference type="InParanoid" id="P08009"/>
<dbReference type="OMA" id="NEAMDFR"/>
<dbReference type="OrthoDB" id="4951845at2759"/>
<dbReference type="PhylomeDB" id="P08009"/>
<dbReference type="TreeFam" id="TF353040"/>
<dbReference type="Reactome" id="R-RNO-156590">
    <property type="pathway name" value="Glutathione conjugation"/>
</dbReference>
<dbReference type="PRO" id="PR:P08009"/>
<dbReference type="Proteomes" id="UP000002494">
    <property type="component" value="Chromosome 2"/>
</dbReference>
<dbReference type="Bgee" id="ENSRNOG00000018937">
    <property type="expression patterns" value="Expressed in liver and 20 other cell types or tissues"/>
</dbReference>
<dbReference type="ExpressionAtlas" id="P08009">
    <property type="expression patterns" value="baseline and differential"/>
</dbReference>
<dbReference type="GO" id="GO:0005829">
    <property type="term" value="C:cytosol"/>
    <property type="evidence" value="ECO:0007669"/>
    <property type="project" value="Ensembl"/>
</dbReference>
<dbReference type="GO" id="GO:0016529">
    <property type="term" value="C:sarcoplasmic reticulum"/>
    <property type="evidence" value="ECO:0007669"/>
    <property type="project" value="Ensembl"/>
</dbReference>
<dbReference type="GO" id="GO:0019899">
    <property type="term" value="F:enzyme binding"/>
    <property type="evidence" value="ECO:0007669"/>
    <property type="project" value="Ensembl"/>
</dbReference>
<dbReference type="GO" id="GO:0005504">
    <property type="term" value="F:fatty acid binding"/>
    <property type="evidence" value="ECO:0007669"/>
    <property type="project" value="Ensembl"/>
</dbReference>
<dbReference type="GO" id="GO:0043295">
    <property type="term" value="F:glutathione binding"/>
    <property type="evidence" value="ECO:0007669"/>
    <property type="project" value="Ensembl"/>
</dbReference>
<dbReference type="GO" id="GO:0004602">
    <property type="term" value="F:glutathione peroxidase activity"/>
    <property type="evidence" value="ECO:0007669"/>
    <property type="project" value="Ensembl"/>
</dbReference>
<dbReference type="GO" id="GO:0004364">
    <property type="term" value="F:glutathione transferase activity"/>
    <property type="evidence" value="ECO:0000318"/>
    <property type="project" value="GO_Central"/>
</dbReference>
<dbReference type="GO" id="GO:0042803">
    <property type="term" value="F:protein homodimerization activity"/>
    <property type="evidence" value="ECO:0007669"/>
    <property type="project" value="Ensembl"/>
</dbReference>
<dbReference type="GO" id="GO:0005102">
    <property type="term" value="F:signaling receptor binding"/>
    <property type="evidence" value="ECO:0007669"/>
    <property type="project" value="Ensembl"/>
</dbReference>
<dbReference type="GO" id="GO:0070458">
    <property type="term" value="P:cellular detoxification of nitrogen compound"/>
    <property type="evidence" value="ECO:0007669"/>
    <property type="project" value="Ensembl"/>
</dbReference>
<dbReference type="GO" id="GO:0071313">
    <property type="term" value="P:cellular response to caffeine"/>
    <property type="evidence" value="ECO:0007669"/>
    <property type="project" value="Ensembl"/>
</dbReference>
<dbReference type="GO" id="GO:0006749">
    <property type="term" value="P:glutathione metabolic process"/>
    <property type="evidence" value="ECO:0000318"/>
    <property type="project" value="GO_Central"/>
</dbReference>
<dbReference type="GO" id="GO:0051122">
    <property type="term" value="P:hepoxilin biosynthetic process"/>
    <property type="evidence" value="ECO:0007669"/>
    <property type="project" value="Ensembl"/>
</dbReference>
<dbReference type="GO" id="GO:0043651">
    <property type="term" value="P:linoleic acid metabolic process"/>
    <property type="evidence" value="ECO:0007669"/>
    <property type="project" value="Ensembl"/>
</dbReference>
<dbReference type="GO" id="GO:0018916">
    <property type="term" value="P:nitrobenzene metabolic process"/>
    <property type="evidence" value="ECO:0007669"/>
    <property type="project" value="Ensembl"/>
</dbReference>
<dbReference type="GO" id="GO:0010881">
    <property type="term" value="P:regulation of cardiac muscle contraction by regulation of the release of sequestered calcium ion"/>
    <property type="evidence" value="ECO:0007669"/>
    <property type="project" value="Ensembl"/>
</dbReference>
<dbReference type="GO" id="GO:0014809">
    <property type="term" value="P:regulation of skeletal muscle contraction by regulation of release of sequestered calcium ion"/>
    <property type="evidence" value="ECO:0007669"/>
    <property type="project" value="Ensembl"/>
</dbReference>
<dbReference type="GO" id="GO:0042178">
    <property type="term" value="P:xenobiotic catabolic process"/>
    <property type="evidence" value="ECO:0007669"/>
    <property type="project" value="Ensembl"/>
</dbReference>
<dbReference type="CDD" id="cd03209">
    <property type="entry name" value="GST_C_Mu"/>
    <property type="match status" value="1"/>
</dbReference>
<dbReference type="CDD" id="cd03075">
    <property type="entry name" value="GST_N_Mu"/>
    <property type="match status" value="1"/>
</dbReference>
<dbReference type="FunFam" id="1.20.1050.10:FF:000083">
    <property type="entry name" value="Glutathione S-transferase Mu 1"/>
    <property type="match status" value="1"/>
</dbReference>
<dbReference type="FunFam" id="3.40.30.10:FF:000603">
    <property type="entry name" value="Glutathione S-transferase Mu 1"/>
    <property type="match status" value="1"/>
</dbReference>
<dbReference type="Gene3D" id="1.20.1050.10">
    <property type="match status" value="1"/>
</dbReference>
<dbReference type="Gene3D" id="3.40.30.10">
    <property type="entry name" value="Glutaredoxin"/>
    <property type="match status" value="1"/>
</dbReference>
<dbReference type="InterPro" id="IPR010987">
    <property type="entry name" value="Glutathione-S-Trfase_C-like"/>
</dbReference>
<dbReference type="InterPro" id="IPR036282">
    <property type="entry name" value="Glutathione-S-Trfase_C_sf"/>
</dbReference>
<dbReference type="InterPro" id="IPR004045">
    <property type="entry name" value="Glutathione_S-Trfase_N"/>
</dbReference>
<dbReference type="InterPro" id="IPR004046">
    <property type="entry name" value="GST_C"/>
</dbReference>
<dbReference type="InterPro" id="IPR003081">
    <property type="entry name" value="GST_mu"/>
</dbReference>
<dbReference type="InterPro" id="IPR050213">
    <property type="entry name" value="GST_superfamily"/>
</dbReference>
<dbReference type="InterPro" id="IPR036249">
    <property type="entry name" value="Thioredoxin-like_sf"/>
</dbReference>
<dbReference type="PANTHER" id="PTHR11571">
    <property type="entry name" value="GLUTATHIONE S-TRANSFERASE"/>
    <property type="match status" value="1"/>
</dbReference>
<dbReference type="PANTHER" id="PTHR11571:SF269">
    <property type="entry name" value="GLUTATHIONE S-TRANSFERASE MU 7"/>
    <property type="match status" value="1"/>
</dbReference>
<dbReference type="Pfam" id="PF00043">
    <property type="entry name" value="GST_C"/>
    <property type="match status" value="1"/>
</dbReference>
<dbReference type="Pfam" id="PF02798">
    <property type="entry name" value="GST_N"/>
    <property type="match status" value="1"/>
</dbReference>
<dbReference type="PRINTS" id="PR01267">
    <property type="entry name" value="GSTRNSFRASEM"/>
</dbReference>
<dbReference type="SFLD" id="SFLDG01205">
    <property type="entry name" value="AMPS.1"/>
    <property type="match status" value="1"/>
</dbReference>
<dbReference type="SFLD" id="SFLDG00363">
    <property type="entry name" value="AMPS_(cytGST):_Alpha-__Mu-__Pi"/>
    <property type="match status" value="1"/>
</dbReference>
<dbReference type="SUPFAM" id="SSF47616">
    <property type="entry name" value="GST C-terminal domain-like"/>
    <property type="match status" value="1"/>
</dbReference>
<dbReference type="SUPFAM" id="SSF52833">
    <property type="entry name" value="Thioredoxin-like"/>
    <property type="match status" value="1"/>
</dbReference>
<dbReference type="PROSITE" id="PS50405">
    <property type="entry name" value="GST_CTER"/>
    <property type="match status" value="1"/>
</dbReference>
<dbReference type="PROSITE" id="PS50404">
    <property type="entry name" value="GST_NTER"/>
    <property type="match status" value="1"/>
</dbReference>
<gene>
    <name evidence="6" type="primary">Gstm7</name>
    <name type="synonym">Gstm3</name>
</gene>
<accession>P08009</accession>
<reference key="1">
    <citation type="journal article" date="1987" name="J. Biol. Chem.">
        <title>Selective expression of a unique glutathione S-transferase Yb3 gene in rat brain.</title>
        <authorList>
            <person name="Abramovitz M."/>
            <person name="Listowsky I."/>
        </authorList>
    </citation>
    <scope>NUCLEOTIDE SEQUENCE [MRNA]</scope>
    <source>
        <tissue>Brain</tissue>
    </source>
</reference>
<reference key="2">
    <citation type="journal article" date="1995" name="Brain Res. Mol. Brain Res.">
        <title>Brain and testis selective expression of the glutathione S-transferase Yb3 subunit is governed by tandem direct repeat octamer motifs in the 5'-flanking region of its gene.</title>
        <authorList>
            <person name="Abramovitz M."/>
            <person name="Testori A."/>
            <person name="Angelov I.V."/>
            <person name="Darmon A."/>
            <person name="Listowsky I."/>
        </authorList>
    </citation>
    <scope>NUCLEOTIDE SEQUENCE [GENOMIC DNA]</scope>
    <source>
        <strain>Sprague-Dawley</strain>
        <tissue>Tail</tissue>
    </source>
</reference>
<reference key="3">
    <citation type="journal article" date="2004" name="Genome Res.">
        <title>The status, quality, and expansion of the NIH full-length cDNA project: the Mammalian Gene Collection (MGC).</title>
        <authorList>
            <consortium name="The MGC Project Team"/>
        </authorList>
    </citation>
    <scope>NUCLEOTIDE SEQUENCE [LARGE SCALE MRNA]</scope>
    <source>
        <tissue>Pituitary</tissue>
    </source>
</reference>
<reference key="4">
    <citation type="submission" date="2009-01" db="UniProtKB">
        <authorList>
            <person name="Lubec G."/>
            <person name="Afjehi-Sadat L."/>
            <person name="Chen W.-Q."/>
            <person name="Kang S.U."/>
        </authorList>
    </citation>
    <scope>PROTEIN SEQUENCE OF 19-50; 53-69; 137-144 AND 153-182</scope>
    <scope>IDENTIFICATION BY MASS SPECTROMETRY</scope>
    <source>
        <strain>Sprague-Dawley</strain>
        <tissue>Brain</tissue>
        <tissue>Hippocampus</tissue>
        <tissue>Spinal cord</tissue>
    </source>
</reference>
<evidence type="ECO:0000250" key="1"/>
<evidence type="ECO:0000250" key="2">
    <source>
        <dbReference type="UniProtKB" id="P08515"/>
    </source>
</evidence>
<evidence type="ECO:0000250" key="3">
    <source>
        <dbReference type="UniProtKB" id="P28161"/>
    </source>
</evidence>
<evidence type="ECO:0000303" key="4">
    <source>
    </source>
</evidence>
<evidence type="ECO:0000305" key="5"/>
<evidence type="ECO:0000312" key="6">
    <source>
        <dbReference type="RGD" id="621287"/>
    </source>
</evidence>
<sequence length="218" mass="25681">MPMTLGYWDIRGLAHAIRLLLEYTDSSYEEKRYTMGDAPDFDRSQWLNEKFKLGLDFPNLPYLIDGSHKITQSNAILRYLGRKHNLCGETEEERIRVDILENQLMDNRMVLARLCYNPDFEKLKPGYLEQLPGMMRLYSEFLGKRPWFAGDKITFVDFIAYDVLERNQVFEATCLDAFPNLKDFIARFEGLKKISDYMKSSRFLPRPLFTKMAIWGSK</sequence>
<keyword id="KW-0963">Cytoplasm</keyword>
<keyword id="KW-0903">Direct protein sequencing</keyword>
<keyword id="KW-1185">Reference proteome</keyword>
<keyword id="KW-0808">Transferase</keyword>
<proteinExistence type="evidence at protein level"/>
<name>GSTM7_RAT</name>
<organism>
    <name type="scientific">Rattus norvegicus</name>
    <name type="common">Rat</name>
    <dbReference type="NCBI Taxonomy" id="10116"/>
    <lineage>
        <taxon>Eukaryota</taxon>
        <taxon>Metazoa</taxon>
        <taxon>Chordata</taxon>
        <taxon>Craniata</taxon>
        <taxon>Vertebrata</taxon>
        <taxon>Euteleostomi</taxon>
        <taxon>Mammalia</taxon>
        <taxon>Eutheria</taxon>
        <taxon>Euarchontoglires</taxon>
        <taxon>Glires</taxon>
        <taxon>Rodentia</taxon>
        <taxon>Myomorpha</taxon>
        <taxon>Muroidea</taxon>
        <taxon>Muridae</taxon>
        <taxon>Murinae</taxon>
        <taxon>Rattus</taxon>
    </lineage>
</organism>
<feature type="chain" id="PRO_0000185833" description="Glutathione S-transferase Mu 7">
    <location>
        <begin position="1"/>
        <end position="218"/>
    </location>
</feature>
<feature type="domain" description="GST N-terminal">
    <location>
        <begin position="2"/>
        <end position="88"/>
    </location>
</feature>
<feature type="domain" description="GST C-terminal">
    <location>
        <begin position="90"/>
        <end position="208"/>
    </location>
</feature>
<feature type="binding site" evidence="2">
    <location>
        <begin position="7"/>
        <end position="8"/>
    </location>
    <ligand>
        <name>glutathione</name>
        <dbReference type="ChEBI" id="CHEBI:57925"/>
    </ligand>
</feature>
<feature type="binding site" evidence="2">
    <location>
        <begin position="46"/>
        <end position="50"/>
    </location>
    <ligand>
        <name>glutathione</name>
        <dbReference type="ChEBI" id="CHEBI:57925"/>
    </ligand>
</feature>
<feature type="binding site" evidence="2">
    <location>
        <begin position="59"/>
        <end position="60"/>
    </location>
    <ligand>
        <name>glutathione</name>
        <dbReference type="ChEBI" id="CHEBI:57925"/>
    </ligand>
</feature>
<feature type="binding site" evidence="2">
    <location>
        <begin position="72"/>
        <end position="73"/>
    </location>
    <ligand>
        <name>glutathione</name>
        <dbReference type="ChEBI" id="CHEBI:57925"/>
    </ligand>
</feature>
<feature type="binding site" evidence="1">
    <location>
        <position position="116"/>
    </location>
    <ligand>
        <name>substrate</name>
    </ligand>
</feature>
<protein>
    <recommendedName>
        <fullName>Glutathione S-transferase Mu 7</fullName>
        <ecNumber evidence="3">2.5.1.18</ecNumber>
    </recommendedName>
    <alternativeName>
        <fullName>Chain 4</fullName>
    </alternativeName>
    <alternativeName>
        <fullName>GST Yb3</fullName>
    </alternativeName>
    <alternativeName>
        <fullName>GST class-mu 3</fullName>
    </alternativeName>
    <alternativeName>
        <fullName evidence="4">Glutathione S-transferase Yb-3</fullName>
    </alternativeName>
</protein>